<protein>
    <recommendedName>
        <fullName evidence="1">UPF0597 protein CBO1815/CLC_1757</fullName>
    </recommendedName>
</protein>
<organism>
    <name type="scientific">Clostridium botulinum (strain Hall / ATCC 3502 / NCTC 13319 / Type A)</name>
    <dbReference type="NCBI Taxonomy" id="441771"/>
    <lineage>
        <taxon>Bacteria</taxon>
        <taxon>Bacillati</taxon>
        <taxon>Bacillota</taxon>
        <taxon>Clostridia</taxon>
        <taxon>Eubacteriales</taxon>
        <taxon>Clostridiaceae</taxon>
        <taxon>Clostridium</taxon>
    </lineage>
</organism>
<feature type="chain" id="PRO_0000339796" description="UPF0597 protein CBO1815/CLC_1757">
    <location>
        <begin position="1"/>
        <end position="426"/>
    </location>
</feature>
<dbReference type="EMBL" id="CP000727">
    <property type="protein sequence ID" value="ABS36089.1"/>
    <property type="molecule type" value="Genomic_DNA"/>
</dbReference>
<dbReference type="EMBL" id="AM412317">
    <property type="protein sequence ID" value="CAL83354.1"/>
    <property type="molecule type" value="Genomic_DNA"/>
</dbReference>
<dbReference type="RefSeq" id="WP_011986389.1">
    <property type="nucleotide sequence ID" value="NC_009698.1"/>
</dbReference>
<dbReference type="RefSeq" id="YP_001254315.1">
    <property type="nucleotide sequence ID" value="NC_009495.1"/>
</dbReference>
<dbReference type="RefSeq" id="YP_001387612.1">
    <property type="nucleotide sequence ID" value="NC_009698.1"/>
</dbReference>
<dbReference type="SMR" id="A5I2T7"/>
<dbReference type="GeneID" id="5186070"/>
<dbReference type="KEGG" id="cbh:CLC_1757"/>
<dbReference type="KEGG" id="cbo:CBO1815"/>
<dbReference type="PATRIC" id="fig|413999.7.peg.1786"/>
<dbReference type="HOGENOM" id="CLU_051840_0_0_9"/>
<dbReference type="PRO" id="PR:A5I2T7"/>
<dbReference type="Proteomes" id="UP000001986">
    <property type="component" value="Chromosome"/>
</dbReference>
<dbReference type="GO" id="GO:0080146">
    <property type="term" value="F:L-cysteine desulfhydrase activity"/>
    <property type="evidence" value="ECO:0000318"/>
    <property type="project" value="GO_Central"/>
</dbReference>
<dbReference type="GO" id="GO:0019450">
    <property type="term" value="P:L-cysteine catabolic process to pyruvate"/>
    <property type="evidence" value="ECO:0000318"/>
    <property type="project" value="GO_Central"/>
</dbReference>
<dbReference type="HAMAP" id="MF_01845">
    <property type="entry name" value="UPF0597"/>
    <property type="match status" value="1"/>
</dbReference>
<dbReference type="InterPro" id="IPR005130">
    <property type="entry name" value="Ser_deHydtase-like_asu"/>
</dbReference>
<dbReference type="InterPro" id="IPR021144">
    <property type="entry name" value="UPF0597"/>
</dbReference>
<dbReference type="PANTHER" id="PTHR30501">
    <property type="entry name" value="UPF0597 PROTEIN YHAM"/>
    <property type="match status" value="1"/>
</dbReference>
<dbReference type="PANTHER" id="PTHR30501:SF2">
    <property type="entry name" value="UPF0597 PROTEIN YHAM"/>
    <property type="match status" value="1"/>
</dbReference>
<dbReference type="Pfam" id="PF03313">
    <property type="entry name" value="SDH_alpha"/>
    <property type="match status" value="1"/>
</dbReference>
<dbReference type="PIRSF" id="PIRSF006054">
    <property type="entry name" value="UCP006054"/>
    <property type="match status" value="1"/>
</dbReference>
<name>Y1815_CLOBH</name>
<accession>A5I2T7</accession>
<accession>A7G497</accession>
<keyword id="KW-1185">Reference proteome</keyword>
<evidence type="ECO:0000255" key="1">
    <source>
        <dbReference type="HAMAP-Rule" id="MF_01845"/>
    </source>
</evidence>
<gene>
    <name type="ordered locus">CBO1815</name>
    <name type="ordered locus">CLC_1757</name>
</gene>
<reference key="1">
    <citation type="journal article" date="2007" name="Genome Res.">
        <title>Genome sequence of a proteolytic (Group I) Clostridium botulinum strain Hall A and comparative analysis of the clostridial genomes.</title>
        <authorList>
            <person name="Sebaihia M."/>
            <person name="Peck M.W."/>
            <person name="Minton N.P."/>
            <person name="Thomson N.R."/>
            <person name="Holden M.T.G."/>
            <person name="Mitchell W.J."/>
            <person name="Carter A.T."/>
            <person name="Bentley S.D."/>
            <person name="Mason D.R."/>
            <person name="Crossman L."/>
            <person name="Paul C.J."/>
            <person name="Ivens A."/>
            <person name="Wells-Bennik M.H.J."/>
            <person name="Davis I.J."/>
            <person name="Cerdeno-Tarraga A.M."/>
            <person name="Churcher C."/>
            <person name="Quail M.A."/>
            <person name="Chillingworth T."/>
            <person name="Feltwell T."/>
            <person name="Fraser A."/>
            <person name="Goodhead I."/>
            <person name="Hance Z."/>
            <person name="Jagels K."/>
            <person name="Larke N."/>
            <person name="Maddison M."/>
            <person name="Moule S."/>
            <person name="Mungall K."/>
            <person name="Norbertczak H."/>
            <person name="Rabbinowitsch E."/>
            <person name="Sanders M."/>
            <person name="Simmonds M."/>
            <person name="White B."/>
            <person name="Whithead S."/>
            <person name="Parkhill J."/>
        </authorList>
    </citation>
    <scope>NUCLEOTIDE SEQUENCE [LARGE SCALE GENOMIC DNA]</scope>
    <source>
        <strain>Hall / ATCC 3502 / NCTC 13319 / Type A</strain>
    </source>
</reference>
<reference key="2">
    <citation type="journal article" date="2007" name="PLoS ONE">
        <title>Analysis of the neurotoxin complex genes in Clostridium botulinum A1-A4 and B1 strains: BoNT/A3, /Ba4 and /B1 clusters are located within plasmids.</title>
        <authorList>
            <person name="Smith T.J."/>
            <person name="Hill K.K."/>
            <person name="Foley B.T."/>
            <person name="Detter J.C."/>
            <person name="Munk A.C."/>
            <person name="Bruce D.C."/>
            <person name="Doggett N.A."/>
            <person name="Smith L.A."/>
            <person name="Marks J.D."/>
            <person name="Xie G."/>
            <person name="Brettin T.S."/>
        </authorList>
    </citation>
    <scope>NUCLEOTIDE SEQUENCE [LARGE SCALE GENOMIC DNA]</scope>
    <source>
        <strain>Hall / ATCC 3502 / NCTC 13319 / Type A</strain>
    </source>
</reference>
<sequence length="426" mass="45939">MDENIIINILRKEMMPGLGVTEPASIALSSAKAYEVIGGEIKNIKIIADPGLFKNAFSCAIPGTKEVGNEMAALLGTICGDASLGLECLRKIKKEDVSKAKTMLDKIDIEIKSQTEGLYVESIVTTNNGIGRTIIRYKHDNIVLVEKNNKILYQKENNLNKSNNFSQEAIDSKKITEMKLDEIVEFVNNVNYEKIEFLLESIKMNKKLSEKGLEGLGIGLGKLILESCNENNYELYAEALTCSAIDARVSGAPVPAMTVTGSGNHGIITTLPLLAIKEKKNLNNEVLARSIALSYIINIYIKEFSGKLSAFCGCAVAAGTGVSAGICYLLGGSLKEIENTIKNMASNITGMICTGGNLACSLKANTGVKAAFLSAKMALNNIVIPNKCGIVSNSIEDTMKNIGRIAYPGMMETDKEILNIMIESSK</sequence>
<proteinExistence type="inferred from homology"/>
<comment type="similarity">
    <text evidence="1">Belongs to the UPF0597 family.</text>
</comment>